<proteinExistence type="inferred from homology"/>
<organism>
    <name type="scientific">Rickettsia conorii (strain ATCC VR-613 / Malish 7)</name>
    <dbReference type="NCBI Taxonomy" id="272944"/>
    <lineage>
        <taxon>Bacteria</taxon>
        <taxon>Pseudomonadati</taxon>
        <taxon>Pseudomonadota</taxon>
        <taxon>Alphaproteobacteria</taxon>
        <taxon>Rickettsiales</taxon>
        <taxon>Rickettsiaceae</taxon>
        <taxon>Rickettsieae</taxon>
        <taxon>Rickettsia</taxon>
        <taxon>spotted fever group</taxon>
    </lineage>
</organism>
<reference key="1">
    <citation type="journal article" date="2001" name="Science">
        <title>Mechanisms of evolution in Rickettsia conorii and R. prowazekii.</title>
        <authorList>
            <person name="Ogata H."/>
            <person name="Audic S."/>
            <person name="Renesto-Audiffren P."/>
            <person name="Fournier P.-E."/>
            <person name="Barbe V."/>
            <person name="Samson D."/>
            <person name="Roux V."/>
            <person name="Cossart P."/>
            <person name="Weissenbach J."/>
            <person name="Claverie J.-M."/>
            <person name="Raoult D."/>
        </authorList>
    </citation>
    <scope>NUCLEOTIDE SEQUENCE [LARGE SCALE GENOMIC DNA]</scope>
    <source>
        <strain>ATCC VR-613 / Malish 7</strain>
    </source>
</reference>
<gene>
    <name evidence="1" type="primary">miaA</name>
    <name type="ordered locus">RC0656</name>
</gene>
<evidence type="ECO:0000255" key="1">
    <source>
        <dbReference type="HAMAP-Rule" id="MF_00185"/>
    </source>
</evidence>
<feature type="chain" id="PRO_0000163965" description="tRNA dimethylallyltransferase">
    <location>
        <begin position="1"/>
        <end position="363"/>
    </location>
</feature>
<feature type="region of interest" description="Unknown insert">
    <location>
        <begin position="1"/>
        <end position="55"/>
    </location>
</feature>
<feature type="region of interest" description="Interaction with substrate tRNA" evidence="1">
    <location>
        <begin position="90"/>
        <end position="93"/>
    </location>
</feature>
<feature type="region of interest" description="Interaction with substrate tRNA" evidence="1">
    <location>
        <begin position="214"/>
        <end position="218"/>
    </location>
</feature>
<feature type="binding site" evidence="1">
    <location>
        <begin position="65"/>
        <end position="72"/>
    </location>
    <ligand>
        <name>ATP</name>
        <dbReference type="ChEBI" id="CHEBI:30616"/>
    </ligand>
</feature>
<feature type="binding site" evidence="1">
    <location>
        <begin position="67"/>
        <end position="72"/>
    </location>
    <ligand>
        <name>substrate</name>
    </ligand>
</feature>
<feature type="site" description="Interaction with substrate tRNA" evidence="1">
    <location>
        <position position="156"/>
    </location>
</feature>
<name>MIAA_RICCN</name>
<dbReference type="EC" id="2.5.1.75" evidence="1"/>
<dbReference type="EMBL" id="AE006914">
    <property type="protein sequence ID" value="AAL03194.1"/>
    <property type="molecule type" value="Genomic_DNA"/>
</dbReference>
<dbReference type="PIR" id="H97781">
    <property type="entry name" value="H97781"/>
</dbReference>
<dbReference type="RefSeq" id="WP_010977282.1">
    <property type="nucleotide sequence ID" value="NC_003103.1"/>
</dbReference>
<dbReference type="SMR" id="Q92HW4"/>
<dbReference type="GeneID" id="927735"/>
<dbReference type="KEGG" id="rco:RC0656"/>
<dbReference type="PATRIC" id="fig|272944.4.peg.748"/>
<dbReference type="HOGENOM" id="CLU_032616_0_1_5"/>
<dbReference type="Proteomes" id="UP000000816">
    <property type="component" value="Chromosome"/>
</dbReference>
<dbReference type="GO" id="GO:0005524">
    <property type="term" value="F:ATP binding"/>
    <property type="evidence" value="ECO:0007669"/>
    <property type="project" value="UniProtKB-UniRule"/>
</dbReference>
<dbReference type="GO" id="GO:0052381">
    <property type="term" value="F:tRNA dimethylallyltransferase activity"/>
    <property type="evidence" value="ECO:0007669"/>
    <property type="project" value="UniProtKB-UniRule"/>
</dbReference>
<dbReference type="GO" id="GO:0006400">
    <property type="term" value="P:tRNA modification"/>
    <property type="evidence" value="ECO:0007669"/>
    <property type="project" value="TreeGrafter"/>
</dbReference>
<dbReference type="Gene3D" id="1.10.20.140">
    <property type="match status" value="1"/>
</dbReference>
<dbReference type="Gene3D" id="3.40.50.300">
    <property type="entry name" value="P-loop containing nucleotide triphosphate hydrolases"/>
    <property type="match status" value="1"/>
</dbReference>
<dbReference type="HAMAP" id="MF_00185">
    <property type="entry name" value="IPP_trans"/>
    <property type="match status" value="1"/>
</dbReference>
<dbReference type="InterPro" id="IPR039657">
    <property type="entry name" value="Dimethylallyltransferase"/>
</dbReference>
<dbReference type="InterPro" id="IPR018022">
    <property type="entry name" value="IPT"/>
</dbReference>
<dbReference type="InterPro" id="IPR027417">
    <property type="entry name" value="P-loop_NTPase"/>
</dbReference>
<dbReference type="NCBIfam" id="TIGR00174">
    <property type="entry name" value="miaA"/>
    <property type="match status" value="1"/>
</dbReference>
<dbReference type="PANTHER" id="PTHR11088">
    <property type="entry name" value="TRNA DIMETHYLALLYLTRANSFERASE"/>
    <property type="match status" value="1"/>
</dbReference>
<dbReference type="PANTHER" id="PTHR11088:SF60">
    <property type="entry name" value="TRNA DIMETHYLALLYLTRANSFERASE"/>
    <property type="match status" value="1"/>
</dbReference>
<dbReference type="Pfam" id="PF01715">
    <property type="entry name" value="IPPT"/>
    <property type="match status" value="1"/>
</dbReference>
<dbReference type="SUPFAM" id="SSF52540">
    <property type="entry name" value="P-loop containing nucleoside triphosphate hydrolases"/>
    <property type="match status" value="2"/>
</dbReference>
<sequence length="363" mass="41636">MLACNDDTSLYLLVKQVTKKEIYSNDLENGNVKRGASMQSLYLIGDPKCCRNNSSKQKSIIILCGPTASGKSYLGHELAKAYNGEIINIDSMQVYKEIPIITASPPKSYKTEILYHLYNFLSMTEDFSVIKYLKLATEKIKEITDRGKLPILIGGTGLYINSLVFGYNNIPDISEDLQEQVRNLHVKIGNIELWSKLEKFDPLAASKINQNDTQRLIRAYEVFMQTGKSIFSFQTLPKEQILSDFNFKIIFLNPERKFLYKTCDERLDKIFKEGAIDEIALIKKQFAPKDYTNLKAVGIKEILAYLNGNLTLDEALNAAQIRTRQYAKRQVTWFKNQIQDKITLEYANQEEFTQTLKNPFKII</sequence>
<protein>
    <recommendedName>
        <fullName evidence="1">tRNA dimethylallyltransferase</fullName>
        <ecNumber evidence="1">2.5.1.75</ecNumber>
    </recommendedName>
    <alternativeName>
        <fullName evidence="1">Dimethylallyl diphosphate:tRNA dimethylallyltransferase</fullName>
        <shortName evidence="1">DMAPP:tRNA dimethylallyltransferase</shortName>
        <shortName evidence="1">DMATase</shortName>
    </alternativeName>
    <alternativeName>
        <fullName evidence="1">Isopentenyl-diphosphate:tRNA isopentenyltransferase</fullName>
        <shortName evidence="1">IPP transferase</shortName>
        <shortName evidence="1">IPPT</shortName>
        <shortName evidence="1">IPTase</shortName>
    </alternativeName>
</protein>
<accession>Q92HW4</accession>
<comment type="function">
    <text evidence="1">Catalyzes the transfer of a dimethylallyl group onto the adenine at position 37 in tRNAs that read codons beginning with uridine, leading to the formation of N6-(dimethylallyl)adenosine (i(6)A).</text>
</comment>
<comment type="catalytic activity">
    <reaction evidence="1">
        <text>adenosine(37) in tRNA + dimethylallyl diphosphate = N(6)-dimethylallyladenosine(37) in tRNA + diphosphate</text>
        <dbReference type="Rhea" id="RHEA:26482"/>
        <dbReference type="Rhea" id="RHEA-COMP:10162"/>
        <dbReference type="Rhea" id="RHEA-COMP:10375"/>
        <dbReference type="ChEBI" id="CHEBI:33019"/>
        <dbReference type="ChEBI" id="CHEBI:57623"/>
        <dbReference type="ChEBI" id="CHEBI:74411"/>
        <dbReference type="ChEBI" id="CHEBI:74415"/>
        <dbReference type="EC" id="2.5.1.75"/>
    </reaction>
</comment>
<comment type="cofactor">
    <cofactor evidence="1">
        <name>Mg(2+)</name>
        <dbReference type="ChEBI" id="CHEBI:18420"/>
    </cofactor>
</comment>
<comment type="subunit">
    <text evidence="1">Monomer.</text>
</comment>
<comment type="similarity">
    <text evidence="1">Belongs to the IPP transferase family.</text>
</comment>
<keyword id="KW-0067">ATP-binding</keyword>
<keyword id="KW-0460">Magnesium</keyword>
<keyword id="KW-0547">Nucleotide-binding</keyword>
<keyword id="KW-0808">Transferase</keyword>
<keyword id="KW-0819">tRNA processing</keyword>